<reference key="1">
    <citation type="journal article" date="2007" name="Nature">
        <title>Evolution of genes and genomes on the Drosophila phylogeny.</title>
        <authorList>
            <consortium name="Drosophila 12 genomes consortium"/>
        </authorList>
    </citation>
    <scope>NUCLEOTIDE SEQUENCE [LARGE SCALE GENOMIC DNA]</scope>
    <source>
        <strain>Tucson 15287-2541.00</strain>
    </source>
</reference>
<keyword id="KW-0501">Molybdenum cofactor biosynthesis</keyword>
<keyword id="KW-0597">Phosphoprotein</keyword>
<keyword id="KW-0663">Pyridoxal phosphate</keyword>
<keyword id="KW-1185">Reference proteome</keyword>
<keyword id="KW-0808">Transferase</keyword>
<comment type="function">
    <text evidence="3">Sulfurates the molybdenum cofactor. Sulfation of molybdenum is essential for xanthine dehydrogenase (XDH) and aldehyde oxidase (ADO) enzymes in which molybdenum cofactor is liganded by 1 oxygen and 1 sulfur atom in active form.</text>
</comment>
<comment type="catalytic activity">
    <reaction evidence="3">
        <text>Mo-molybdopterin + L-cysteine + AH2 = thio-Mo-molybdopterin + L-alanine + A + H2O</text>
        <dbReference type="Rhea" id="RHEA:42636"/>
        <dbReference type="ChEBI" id="CHEBI:13193"/>
        <dbReference type="ChEBI" id="CHEBI:15377"/>
        <dbReference type="ChEBI" id="CHEBI:17499"/>
        <dbReference type="ChEBI" id="CHEBI:35235"/>
        <dbReference type="ChEBI" id="CHEBI:57972"/>
        <dbReference type="ChEBI" id="CHEBI:71302"/>
        <dbReference type="ChEBI" id="CHEBI:82685"/>
        <dbReference type="EC" id="2.8.1.9"/>
    </reaction>
</comment>
<comment type="cofactor">
    <cofactor evidence="3">
        <name>pyridoxal 5'-phosphate</name>
        <dbReference type="ChEBI" id="CHEBI:597326"/>
    </cofactor>
</comment>
<comment type="pathway">
    <text evidence="2">Cofactor biosynthesis; molybdopterin biosynthesis.</text>
</comment>
<comment type="similarity">
    <text evidence="3">Belongs to the class-V pyridoxal-phosphate-dependent aminotransferase family. MOCOS subfamily.</text>
</comment>
<feature type="chain" id="PRO_0000369372" description="Molybdenum cofactor sulfurase">
    <location>
        <begin position="1"/>
        <end position="770"/>
    </location>
</feature>
<feature type="domain" description="MOSC" evidence="3">
    <location>
        <begin position="611"/>
        <end position="769"/>
    </location>
</feature>
<feature type="active site" evidence="3">
    <location>
        <position position="405"/>
    </location>
</feature>
<feature type="modified residue" description="N6-(pyridoxal phosphate)lysine" evidence="3">
    <location>
        <position position="243"/>
    </location>
</feature>
<feature type="modified residue" description="Phosphoserine" evidence="1">
    <location>
        <position position="726"/>
    </location>
</feature>
<name>MOCOS_DROGR</name>
<protein>
    <recommendedName>
        <fullName evidence="3">Molybdenum cofactor sulfurase</fullName>
        <shortName evidence="3">MCS</shortName>
        <shortName evidence="3">MOS</shortName>
        <shortName evidence="3">MoCo sulfurase</shortName>
        <ecNumber evidence="3">2.8.1.9</ecNumber>
    </recommendedName>
    <alternativeName>
        <fullName evidence="3">Molybdenum cofactor sulfurtransferase</fullName>
    </alternativeName>
    <alternativeName>
        <fullName evidence="3">Protein maroon-like</fullName>
        <shortName evidence="3">Ma-l</shortName>
    </alternativeName>
</protein>
<sequence length="770" mass="86441">MGDYTAEFTPDEQALIDAEFARLSDSTYLDHAGTTLYAHNQVSDAAQQLQRDVICNPHTCRVTGDYVDQVRYKILEFFNTNADEYHVVFTANASAALRLVADHFDFGTNGNFHYCQENHTSVLGMRQLVSANRIYMLTKDQILLNNGTPAGATAAAATAHSDNSLVVFSAQCNFSGYKMPLTVIEKIQQDGLREPGKCIDCKLQSDPGQSNYYVCLDAASYAASSPLDLRRHRPDYVCLSFYKIFGYPTGVGALLVSKRGAELLKKRFYGGGTVNFAYPHTMEHQLRSTFHERFEDGTLPFLSIVELLQGFQTLQRLVPGRSMERISRHVHSLARYCEQQLLQMQYPNGAPLVTLYNHAGYEDRMQQGGIVAFNVRTAAGDYVGFGEIASVAALHRILLRTGCFCNVGACQHFMNLNGDAMDAIYKLAGRICGDYYDLLDGRPTGAVRVSFGYMTRLQDVDRLLQMLRDSYLSVKWHQRLDFIEQRVQQLPKLLQQRAQQLRPQLLQLAIYPVKSCAALKMPASALTDQGLQYDREWMIVDLNGMALTQKRCTDLCLIQPRIVADQLQLHFNGDGSTTFVSVPLSLTDQATNSARCQSKVCRQSVEGYDCGDEVANWLCQQLGLDGLRLLRQSAQRRAPGDRQQLSLVNQAQFLLVNRASVRSLGFEEPLDETVDRFRSNIVIDTGVPFEELEFGQLRIGEVLFQVEGPCQRCDMICINQRTGQRSPDTLTTIARIQSGKMRFGIYISRLPNENRMQPQLACGDPITVLR</sequence>
<accession>B4JXP7</accession>
<dbReference type="EC" id="2.8.1.9" evidence="3"/>
<dbReference type="EMBL" id="CH916376">
    <property type="protein sequence ID" value="EDV95146.1"/>
    <property type="molecule type" value="Genomic_DNA"/>
</dbReference>
<dbReference type="SMR" id="B4JXP7"/>
<dbReference type="FunCoup" id="B4JXP7">
    <property type="interactions" value="164"/>
</dbReference>
<dbReference type="STRING" id="7222.B4JXP7"/>
<dbReference type="EnsemblMetazoa" id="FBtr0153145">
    <property type="protein sequence ID" value="FBpp0151637"/>
    <property type="gene ID" value="FBgn0125201"/>
</dbReference>
<dbReference type="EnsemblMetazoa" id="XM_001995458.2">
    <property type="protein sequence ID" value="XP_001995494.1"/>
    <property type="gene ID" value="LOC6569472"/>
</dbReference>
<dbReference type="GeneID" id="6569472"/>
<dbReference type="KEGG" id="dgr:6569472"/>
<dbReference type="CTD" id="4118"/>
<dbReference type="eggNOG" id="KOG2142">
    <property type="taxonomic scope" value="Eukaryota"/>
</dbReference>
<dbReference type="HOGENOM" id="CLU_010913_0_1_1"/>
<dbReference type="InParanoid" id="B4JXP7"/>
<dbReference type="OMA" id="PCTRCQM"/>
<dbReference type="OrthoDB" id="420046at2759"/>
<dbReference type="PhylomeDB" id="B4JXP7"/>
<dbReference type="UniPathway" id="UPA00344"/>
<dbReference type="Proteomes" id="UP000001070">
    <property type="component" value="Unassembled WGS sequence"/>
</dbReference>
<dbReference type="GO" id="GO:0016829">
    <property type="term" value="F:lyase activity"/>
    <property type="evidence" value="ECO:0007669"/>
    <property type="project" value="UniProtKB-UniRule"/>
</dbReference>
<dbReference type="GO" id="GO:0008265">
    <property type="term" value="F:molybdenum cofactor sulfurtransferase activity"/>
    <property type="evidence" value="ECO:0000250"/>
    <property type="project" value="UniProtKB"/>
</dbReference>
<dbReference type="GO" id="GO:0030151">
    <property type="term" value="F:molybdenum ion binding"/>
    <property type="evidence" value="ECO:0007669"/>
    <property type="project" value="UniProtKB-UniRule"/>
</dbReference>
<dbReference type="GO" id="GO:0030170">
    <property type="term" value="F:pyridoxal phosphate binding"/>
    <property type="evidence" value="ECO:0007669"/>
    <property type="project" value="UniProtKB-UniRule"/>
</dbReference>
<dbReference type="GO" id="GO:0006777">
    <property type="term" value="P:Mo-molybdopterin cofactor biosynthetic process"/>
    <property type="evidence" value="ECO:0007669"/>
    <property type="project" value="UniProtKB-UniRule"/>
</dbReference>
<dbReference type="GO" id="GO:0043545">
    <property type="term" value="P:molybdopterin cofactor metabolic process"/>
    <property type="evidence" value="ECO:0000250"/>
    <property type="project" value="UniProtKB"/>
</dbReference>
<dbReference type="FunFam" id="3.40.640.10:FF:000119">
    <property type="entry name" value="Molybdenum cofactor sulfurase"/>
    <property type="match status" value="1"/>
</dbReference>
<dbReference type="FunFam" id="3.90.1150.10:FF:000079">
    <property type="entry name" value="Molybdenum cofactor sulfurase"/>
    <property type="match status" value="1"/>
</dbReference>
<dbReference type="Gene3D" id="3.90.1150.10">
    <property type="entry name" value="Aspartate Aminotransferase, domain 1"/>
    <property type="match status" value="1"/>
</dbReference>
<dbReference type="Gene3D" id="3.40.640.10">
    <property type="entry name" value="Type I PLP-dependent aspartate aminotransferase-like (Major domain)"/>
    <property type="match status" value="1"/>
</dbReference>
<dbReference type="HAMAP" id="MF_03050">
    <property type="entry name" value="MOCOS"/>
    <property type="match status" value="1"/>
</dbReference>
<dbReference type="InterPro" id="IPR000192">
    <property type="entry name" value="Aminotrans_V_dom"/>
</dbReference>
<dbReference type="InterPro" id="IPR005302">
    <property type="entry name" value="MoCF_Sase_C"/>
</dbReference>
<dbReference type="InterPro" id="IPR028886">
    <property type="entry name" value="MoCo_sulfurase"/>
</dbReference>
<dbReference type="InterPro" id="IPR005303">
    <property type="entry name" value="MOCOS_middle"/>
</dbReference>
<dbReference type="InterPro" id="IPR015424">
    <property type="entry name" value="PyrdxlP-dep_Trfase"/>
</dbReference>
<dbReference type="InterPro" id="IPR015421">
    <property type="entry name" value="PyrdxlP-dep_Trfase_major"/>
</dbReference>
<dbReference type="InterPro" id="IPR015422">
    <property type="entry name" value="PyrdxlP-dep_Trfase_small"/>
</dbReference>
<dbReference type="InterPro" id="IPR011037">
    <property type="entry name" value="Pyrv_Knase-like_insert_dom_sf"/>
</dbReference>
<dbReference type="PANTHER" id="PTHR14237:SF19">
    <property type="entry name" value="MITOCHONDRIAL AMIDOXIME REDUCING COMPONENT 1"/>
    <property type="match status" value="1"/>
</dbReference>
<dbReference type="PANTHER" id="PTHR14237">
    <property type="entry name" value="MOLYBDOPTERIN COFACTOR SULFURASE MOSC"/>
    <property type="match status" value="1"/>
</dbReference>
<dbReference type="Pfam" id="PF00266">
    <property type="entry name" value="Aminotran_5"/>
    <property type="match status" value="2"/>
</dbReference>
<dbReference type="Pfam" id="PF03473">
    <property type="entry name" value="MOSC"/>
    <property type="match status" value="1"/>
</dbReference>
<dbReference type="Pfam" id="PF03476">
    <property type="entry name" value="MOSC_N"/>
    <property type="match status" value="1"/>
</dbReference>
<dbReference type="SUPFAM" id="SSF141673">
    <property type="entry name" value="MOSC N-terminal domain-like"/>
    <property type="match status" value="1"/>
</dbReference>
<dbReference type="SUPFAM" id="SSF50800">
    <property type="entry name" value="PK beta-barrel domain-like"/>
    <property type="match status" value="1"/>
</dbReference>
<dbReference type="SUPFAM" id="SSF53383">
    <property type="entry name" value="PLP-dependent transferases"/>
    <property type="match status" value="1"/>
</dbReference>
<dbReference type="PROSITE" id="PS51340">
    <property type="entry name" value="MOSC"/>
    <property type="match status" value="1"/>
</dbReference>
<organism>
    <name type="scientific">Drosophila grimshawi</name>
    <name type="common">Hawaiian fruit fly</name>
    <name type="synonym">Idiomyia grimshawi</name>
    <dbReference type="NCBI Taxonomy" id="7222"/>
    <lineage>
        <taxon>Eukaryota</taxon>
        <taxon>Metazoa</taxon>
        <taxon>Ecdysozoa</taxon>
        <taxon>Arthropoda</taxon>
        <taxon>Hexapoda</taxon>
        <taxon>Insecta</taxon>
        <taxon>Pterygota</taxon>
        <taxon>Neoptera</taxon>
        <taxon>Endopterygota</taxon>
        <taxon>Diptera</taxon>
        <taxon>Brachycera</taxon>
        <taxon>Muscomorpha</taxon>
        <taxon>Ephydroidea</taxon>
        <taxon>Drosophilidae</taxon>
        <taxon>Drosophila</taxon>
        <taxon>Hawaiian Drosophila</taxon>
    </lineage>
</organism>
<evidence type="ECO:0000250" key="1"/>
<evidence type="ECO:0000250" key="2">
    <source>
        <dbReference type="UniProtKB" id="Q96EN8"/>
    </source>
</evidence>
<evidence type="ECO:0000255" key="3">
    <source>
        <dbReference type="HAMAP-Rule" id="MF_03050"/>
    </source>
</evidence>
<gene>
    <name evidence="3" type="primary">mal</name>
    <name type="ORF">GH17731</name>
</gene>
<proteinExistence type="inferred from homology"/>